<protein>
    <recommendedName>
        <fullName evidence="1">4-hydroxy-2-oxo-heptane-1,7-dioate aldolase</fullName>
        <ecNumber evidence="1">4.1.2.52</ecNumber>
    </recommendedName>
    <alternativeName>
        <fullName evidence="1">2,4-dihydroxyhept-2-ene-1,7-dioic acid aldolase</fullName>
        <shortName evidence="1">HHED aldolase</shortName>
    </alternativeName>
    <alternativeName>
        <fullName evidence="1">4-hydroxy-2-ketoheptane-1,7-dioate aldolase</fullName>
        <shortName evidence="1">HKHD aldolase</shortName>
    </alternativeName>
</protein>
<reference key="1">
    <citation type="journal article" date="2005" name="Nucleic Acids Res.">
        <title>The genome sequence of Salmonella enterica serovar Choleraesuis, a highly invasive and resistant zoonotic pathogen.</title>
        <authorList>
            <person name="Chiu C.-H."/>
            <person name="Tang P."/>
            <person name="Chu C."/>
            <person name="Hu S."/>
            <person name="Bao Q."/>
            <person name="Yu J."/>
            <person name="Chou Y.-Y."/>
            <person name="Wang H.-S."/>
            <person name="Lee Y.-S."/>
        </authorList>
    </citation>
    <scope>NUCLEOTIDE SEQUENCE [LARGE SCALE GENOMIC DNA]</scope>
    <source>
        <strain>SC-B67</strain>
    </source>
</reference>
<comment type="function">
    <text evidence="1">Catalyzes the reversible retro-aldol cleavage of 4-hydroxy-2-ketoheptane-1,7-dioate (HKHD) to pyruvate and succinic semialdehyde.</text>
</comment>
<comment type="catalytic activity">
    <reaction evidence="1">
        <text>4-hydroxy-2-oxoheptanedioate = succinate semialdehyde + pyruvate</text>
        <dbReference type="Rhea" id="RHEA:25788"/>
        <dbReference type="ChEBI" id="CHEBI:15361"/>
        <dbReference type="ChEBI" id="CHEBI:57706"/>
        <dbReference type="ChEBI" id="CHEBI:73036"/>
        <dbReference type="EC" id="4.1.2.52"/>
    </reaction>
</comment>
<comment type="cofactor">
    <cofactor evidence="1">
        <name>a divalent metal cation</name>
        <dbReference type="ChEBI" id="CHEBI:60240"/>
    </cofactor>
    <text evidence="1">Binds 1 divalent metal cation per subunit.</text>
</comment>
<comment type="pathway">
    <text evidence="1">Aromatic compound metabolism; 4-hydroxyphenylacetate degradation; pyruvate and succinate semialdehyde from 4-hydroxyphenylacetate: step 7/7.</text>
</comment>
<comment type="subunit">
    <text evidence="1">Homohexamer; trimer of dimers.</text>
</comment>
<comment type="similarity">
    <text evidence="1">Belongs to the HpcH/HpaI aldolase family.</text>
</comment>
<proteinExistence type="inferred from homology"/>
<keyword id="KW-0058">Aromatic hydrocarbons catabolism</keyword>
<keyword id="KW-0456">Lyase</keyword>
<keyword id="KW-0479">Metal-binding</keyword>
<name>HPCH_SALCH</name>
<feature type="chain" id="PRO_0000355107" description="4-hydroxy-2-oxo-heptane-1,7-dioate aldolase">
    <location>
        <begin position="1"/>
        <end position="263"/>
    </location>
</feature>
<feature type="active site" description="Proton acceptor" evidence="1">
    <location>
        <position position="45"/>
    </location>
</feature>
<feature type="binding site" evidence="1">
    <location>
        <position position="147"/>
    </location>
    <ligand>
        <name>substrate</name>
    </ligand>
</feature>
<feature type="binding site" evidence="1">
    <location>
        <position position="149"/>
    </location>
    <ligand>
        <name>a divalent metal cation</name>
        <dbReference type="ChEBI" id="CHEBI:60240"/>
    </ligand>
</feature>
<feature type="binding site" evidence="1">
    <location>
        <position position="174"/>
    </location>
    <ligand>
        <name>substrate</name>
    </ligand>
</feature>
<feature type="binding site" evidence="1">
    <location>
        <position position="175"/>
    </location>
    <ligand>
        <name>a divalent metal cation</name>
        <dbReference type="ChEBI" id="CHEBI:60240"/>
    </ligand>
</feature>
<feature type="binding site" evidence="1">
    <location>
        <position position="175"/>
    </location>
    <ligand>
        <name>substrate</name>
    </ligand>
</feature>
<feature type="site" description="Transition state stabilizer" evidence="1">
    <location>
        <position position="70"/>
    </location>
</feature>
<feature type="site" description="Increases basicity of active site His" evidence="1">
    <location>
        <position position="84"/>
    </location>
</feature>
<organism>
    <name type="scientific">Salmonella choleraesuis (strain SC-B67)</name>
    <dbReference type="NCBI Taxonomy" id="321314"/>
    <lineage>
        <taxon>Bacteria</taxon>
        <taxon>Pseudomonadati</taxon>
        <taxon>Pseudomonadota</taxon>
        <taxon>Gammaproteobacteria</taxon>
        <taxon>Enterobacterales</taxon>
        <taxon>Enterobacteriaceae</taxon>
        <taxon>Salmonella</taxon>
    </lineage>
</organism>
<dbReference type="EC" id="4.1.2.52" evidence="1"/>
<dbReference type="EMBL" id="AE017220">
    <property type="protein sequence ID" value="AAX64962.1"/>
    <property type="molecule type" value="Genomic_DNA"/>
</dbReference>
<dbReference type="RefSeq" id="WP_000785083.1">
    <property type="nucleotide sequence ID" value="NC_006905.1"/>
</dbReference>
<dbReference type="SMR" id="Q57QP9"/>
<dbReference type="KEGG" id="sec:SCH_1056"/>
<dbReference type="HOGENOM" id="CLU_059964_1_0_6"/>
<dbReference type="UniPathway" id="UPA00208">
    <property type="reaction ID" value="UER00422"/>
</dbReference>
<dbReference type="Proteomes" id="UP000000538">
    <property type="component" value="Chromosome"/>
</dbReference>
<dbReference type="GO" id="GO:0005737">
    <property type="term" value="C:cytoplasm"/>
    <property type="evidence" value="ECO:0007669"/>
    <property type="project" value="TreeGrafter"/>
</dbReference>
<dbReference type="GO" id="GO:0043863">
    <property type="term" value="F:4-hydroxy-2-ketopimelate aldolase activity"/>
    <property type="evidence" value="ECO:0007669"/>
    <property type="project" value="RHEA"/>
</dbReference>
<dbReference type="GO" id="GO:0046872">
    <property type="term" value="F:metal ion binding"/>
    <property type="evidence" value="ECO:0007669"/>
    <property type="project" value="UniProtKB-UniRule"/>
</dbReference>
<dbReference type="GO" id="GO:1901023">
    <property type="term" value="P:4-hydroxyphenylacetate catabolic process"/>
    <property type="evidence" value="ECO:0007669"/>
    <property type="project" value="UniProtKB-UniRule"/>
</dbReference>
<dbReference type="GO" id="GO:0010124">
    <property type="term" value="P:phenylacetate catabolic process"/>
    <property type="evidence" value="ECO:0007669"/>
    <property type="project" value="InterPro"/>
</dbReference>
<dbReference type="FunFam" id="3.20.20.60:FF:000004">
    <property type="entry name" value="5-keto-4-deoxy-D-glucarate aldolase"/>
    <property type="match status" value="1"/>
</dbReference>
<dbReference type="Gene3D" id="3.20.20.60">
    <property type="entry name" value="Phosphoenolpyruvate-binding domains"/>
    <property type="match status" value="1"/>
</dbReference>
<dbReference type="HAMAP" id="MF_01292">
    <property type="entry name" value="HKHD_aldolase"/>
    <property type="match status" value="1"/>
</dbReference>
<dbReference type="InterPro" id="IPR005000">
    <property type="entry name" value="Aldolase/citrate-lyase_domain"/>
</dbReference>
<dbReference type="InterPro" id="IPR023701">
    <property type="entry name" value="HKHD_aldolase_ent"/>
</dbReference>
<dbReference type="InterPro" id="IPR012689">
    <property type="entry name" value="HpaI"/>
</dbReference>
<dbReference type="InterPro" id="IPR050251">
    <property type="entry name" value="HpcH-HpaI_aldolase"/>
</dbReference>
<dbReference type="InterPro" id="IPR015813">
    <property type="entry name" value="Pyrv/PenolPyrv_kinase-like_dom"/>
</dbReference>
<dbReference type="InterPro" id="IPR040442">
    <property type="entry name" value="Pyrv_kinase-like_dom_sf"/>
</dbReference>
<dbReference type="NCBIfam" id="TIGR02311">
    <property type="entry name" value="HpaI"/>
    <property type="match status" value="1"/>
</dbReference>
<dbReference type="PANTHER" id="PTHR30502">
    <property type="entry name" value="2-KETO-3-DEOXY-L-RHAMNONATE ALDOLASE"/>
    <property type="match status" value="1"/>
</dbReference>
<dbReference type="PANTHER" id="PTHR30502:SF0">
    <property type="entry name" value="PHOSPHOENOLPYRUVATE CARBOXYLASE FAMILY PROTEIN"/>
    <property type="match status" value="1"/>
</dbReference>
<dbReference type="Pfam" id="PF03328">
    <property type="entry name" value="HpcH_HpaI"/>
    <property type="match status" value="1"/>
</dbReference>
<dbReference type="SUPFAM" id="SSF51621">
    <property type="entry name" value="Phosphoenolpyruvate/pyruvate domain"/>
    <property type="match status" value="1"/>
</dbReference>
<accession>Q57QP9</accession>
<sequence length="263" mass="27857">MKNAFKDTLKAGRPQIGLWLGLANSYSAELLAGAGFDWLLIDGEHAPNNVQTVLTQLQAIAPYPSQPVVRPSWNDPVQIKQLLDVGAQTLLIPMVQNADEARNAVAATRYPPAGIRGVGSALARASRWNRIPDYLHQANDAMCVLVQIETREAMSNLASILDVDGIDGVFIGPADLSADMGFAGNPQHPEVQAAIENAIVQIRAAGKAPGILMANEPLAKRYLELGALFVAVGVDTTLLARGAEALAARFGVEKNLSGASGVY</sequence>
<gene>
    <name evidence="1" type="primary">hpcH</name>
    <name evidence="1" type="synonym">hpaI</name>
    <name type="ordered locus">SCH_1056</name>
</gene>
<evidence type="ECO:0000255" key="1">
    <source>
        <dbReference type="HAMAP-Rule" id="MF_01292"/>
    </source>
</evidence>